<sequence length="565" mass="60529">MSRSLSECIDQGRGLVPADLVLKHGRVFDLVTGELVQTDVAICGDRIVGTFGTYTGRREIDCRGRILVPGFIDTHLHVESSLVTPFEFDRCVTPRGITTAICDPHEIANVCGLEGIRYFLEASAHLVMDLRVQLSSCVPSTHMETAGAALEAKDLAPLLDHPRVIGLAEFMNFPGVLMKDPGCMAKLEAFRGRHIDGHAPLLRGKDLNGYIAAGIRTEHEATTADEALEKLRKGMRVLIREGSVSKDLHALVSILTERHAPYLCLCTDDRNPLDIAEHGHIDHMIRTAIRLGAPPLAVYRAASLSAAEAFGLKDRGLIAPGRRADIAVLDSLEGCHAALVLAGGVVADDAAFSARSGVEPVARASVKVAEIAPEAFRCPGNRAETPVIGILPGKIITEHLTAEIEPVDGDKRPDPARDLARIAVIERHGKTGGRATGFVQGFGMARGAIASTVCHDHHNLAVVGIDYADMALAANRLRALEGGFAVAAGGEILAELALPVGGLMSLRPFEEVRDALVTLREAARSLGVTLEEPFLQLAFLALPVIPHLKITDRGMVDVDRFEILP</sequence>
<gene>
    <name evidence="1" type="primary">ade</name>
    <name type="ordered locus">RSKD131_2377</name>
</gene>
<dbReference type="EC" id="3.5.4.2" evidence="1"/>
<dbReference type="EMBL" id="CP001150">
    <property type="protein sequence ID" value="ACM02237.1"/>
    <property type="molecule type" value="Genomic_DNA"/>
</dbReference>
<dbReference type="RefSeq" id="WP_015921379.1">
    <property type="nucleotide sequence ID" value="NC_011963.1"/>
</dbReference>
<dbReference type="SMR" id="B9KND1"/>
<dbReference type="GeneID" id="67447757"/>
<dbReference type="KEGG" id="rsk:RSKD131_2377"/>
<dbReference type="HOGENOM" id="CLU_027935_0_0_5"/>
<dbReference type="GO" id="GO:0000034">
    <property type="term" value="F:adenine deaminase activity"/>
    <property type="evidence" value="ECO:0007669"/>
    <property type="project" value="UniProtKB-UniRule"/>
</dbReference>
<dbReference type="GO" id="GO:0006146">
    <property type="term" value="P:adenine catabolic process"/>
    <property type="evidence" value="ECO:0007669"/>
    <property type="project" value="InterPro"/>
</dbReference>
<dbReference type="CDD" id="cd01295">
    <property type="entry name" value="AdeC"/>
    <property type="match status" value="1"/>
</dbReference>
<dbReference type="Gene3D" id="3.20.20.140">
    <property type="entry name" value="Metal-dependent hydrolases"/>
    <property type="match status" value="1"/>
</dbReference>
<dbReference type="Gene3D" id="2.30.40.10">
    <property type="entry name" value="Urease, subunit C, domain 1"/>
    <property type="match status" value="1"/>
</dbReference>
<dbReference type="HAMAP" id="MF_01518">
    <property type="entry name" value="Adenine_deamin"/>
    <property type="match status" value="1"/>
</dbReference>
<dbReference type="InterPro" id="IPR006679">
    <property type="entry name" value="Adenine_deam"/>
</dbReference>
<dbReference type="InterPro" id="IPR026912">
    <property type="entry name" value="Adenine_deam_C"/>
</dbReference>
<dbReference type="InterPro" id="IPR006680">
    <property type="entry name" value="Amidohydro-rel"/>
</dbReference>
<dbReference type="InterPro" id="IPR011059">
    <property type="entry name" value="Metal-dep_hydrolase_composite"/>
</dbReference>
<dbReference type="InterPro" id="IPR032466">
    <property type="entry name" value="Metal_Hydrolase"/>
</dbReference>
<dbReference type="NCBIfam" id="TIGR01178">
    <property type="entry name" value="ade"/>
    <property type="match status" value="1"/>
</dbReference>
<dbReference type="PANTHER" id="PTHR11113:SF2">
    <property type="entry name" value="ADENINE DEAMINASE"/>
    <property type="match status" value="1"/>
</dbReference>
<dbReference type="PANTHER" id="PTHR11113">
    <property type="entry name" value="N-ACETYLGLUCOSAMINE-6-PHOSPHATE DEACETYLASE"/>
    <property type="match status" value="1"/>
</dbReference>
<dbReference type="Pfam" id="PF13382">
    <property type="entry name" value="Adenine_deam_C"/>
    <property type="match status" value="1"/>
</dbReference>
<dbReference type="Pfam" id="PF01979">
    <property type="entry name" value="Amidohydro_1"/>
    <property type="match status" value="1"/>
</dbReference>
<dbReference type="SUPFAM" id="SSF51338">
    <property type="entry name" value="Composite domain of metallo-dependent hydrolases"/>
    <property type="match status" value="1"/>
</dbReference>
<dbReference type="SUPFAM" id="SSF51556">
    <property type="entry name" value="Metallo-dependent hydrolases"/>
    <property type="match status" value="1"/>
</dbReference>
<comment type="catalytic activity">
    <reaction evidence="1">
        <text>adenine + H2O + H(+) = hypoxanthine + NH4(+)</text>
        <dbReference type="Rhea" id="RHEA:23688"/>
        <dbReference type="ChEBI" id="CHEBI:15377"/>
        <dbReference type="ChEBI" id="CHEBI:15378"/>
        <dbReference type="ChEBI" id="CHEBI:16708"/>
        <dbReference type="ChEBI" id="CHEBI:17368"/>
        <dbReference type="ChEBI" id="CHEBI:28938"/>
        <dbReference type="EC" id="3.5.4.2"/>
    </reaction>
</comment>
<comment type="cofactor">
    <cofactor evidence="1">
        <name>Mn(2+)</name>
        <dbReference type="ChEBI" id="CHEBI:29035"/>
    </cofactor>
</comment>
<comment type="similarity">
    <text evidence="1">Belongs to the metallo-dependent hydrolases superfamily. Adenine deaminase family.</text>
</comment>
<name>ADEC_CERSK</name>
<proteinExistence type="inferred from homology"/>
<protein>
    <recommendedName>
        <fullName evidence="1">Adenine deaminase</fullName>
        <shortName evidence="1">Adenase</shortName>
        <shortName evidence="1">Adenine aminase</shortName>
        <ecNumber evidence="1">3.5.4.2</ecNumber>
    </recommendedName>
</protein>
<keyword id="KW-0378">Hydrolase</keyword>
<keyword id="KW-0464">Manganese</keyword>
<organism>
    <name type="scientific">Cereibacter sphaeroides (strain KD131 / KCTC 12085)</name>
    <name type="common">Rhodobacter sphaeroides</name>
    <dbReference type="NCBI Taxonomy" id="557760"/>
    <lineage>
        <taxon>Bacteria</taxon>
        <taxon>Pseudomonadati</taxon>
        <taxon>Pseudomonadota</taxon>
        <taxon>Alphaproteobacteria</taxon>
        <taxon>Rhodobacterales</taxon>
        <taxon>Paracoccaceae</taxon>
        <taxon>Cereibacter</taxon>
    </lineage>
</organism>
<reference key="1">
    <citation type="journal article" date="2009" name="J. Bacteriol.">
        <title>Complete genome sequence of Rhodobacter sphaeroides KD131.</title>
        <authorList>
            <person name="Lim S.-K."/>
            <person name="Kim S.J."/>
            <person name="Cha S.H."/>
            <person name="Oh Y.-K."/>
            <person name="Rhee H.-J."/>
            <person name="Kim M.-S."/>
            <person name="Lee J.K."/>
        </authorList>
    </citation>
    <scope>NUCLEOTIDE SEQUENCE [LARGE SCALE GENOMIC DNA]</scope>
    <source>
        <strain>KD131 / KCTC 12085</strain>
    </source>
</reference>
<accession>B9KND1</accession>
<evidence type="ECO:0000255" key="1">
    <source>
        <dbReference type="HAMAP-Rule" id="MF_01518"/>
    </source>
</evidence>
<feature type="chain" id="PRO_1000185091" description="Adenine deaminase">
    <location>
        <begin position="1"/>
        <end position="565"/>
    </location>
</feature>